<feature type="initiator methionine" description="Removed" evidence="1">
    <location>
        <position position="1"/>
    </location>
</feature>
<feature type="chain" id="PRO_0000220736" description="Guanine nucleotide exchange factor SopE">
    <location>
        <begin position="2"/>
        <end position="240"/>
    </location>
</feature>
<feature type="region of interest" description="GEF catalytic domain" evidence="1">
    <location>
        <begin position="78"/>
        <end position="240"/>
    </location>
</feature>
<name>SOPE_SALHA</name>
<evidence type="ECO:0000250" key="1"/>
<evidence type="ECO:0000305" key="2"/>
<reference key="1">
    <citation type="journal article" date="2001" name="J. Mol. Biol.">
        <title>Transfer of the Salmonella type III effector sopE between unrelated phage families.</title>
        <authorList>
            <person name="Mirold S."/>
            <person name="Rabsch W."/>
            <person name="Tschaepe H."/>
            <person name="Hardt W.-D."/>
        </authorList>
    </citation>
    <scope>NUCLEOTIDE SEQUENCE [GENOMIC DNA]</scope>
    <scope>PROPHAGE-RELATED REGION</scope>
    <source>
        <strain>X3230</strain>
    </source>
</reference>
<sequence>MTKITLFPHNFRIQKQETTPLKEKSTEKNSLAKSILAVKNHFIKLNSKLSERFISHKNTESSATHFHRGSASEGRAVLTNKVVKNFMLQTLHDIDIRGSASKDPAYASQTREAILSAVYSKYKDQYCNLLISKGIDIAPFLKEIGEAAQNAGLPGATKNDVFTPSGAGANPFITPLITSAYSKYPHMFTSQHQKASFNIYAEKIIMTEVVPLFNECAMPTPQQFQQILENIANKYIQNAP</sequence>
<dbReference type="EMBL" id="AY034828">
    <property type="protein sequence ID" value="AAK63078.1"/>
    <property type="molecule type" value="Genomic_DNA"/>
</dbReference>
<dbReference type="RefSeq" id="WP_000161703.1">
    <property type="nucleotide sequence ID" value="NZ_CALOZL010000015.1"/>
</dbReference>
<dbReference type="SMR" id="Q8VPM1"/>
<dbReference type="PATRIC" id="fig|149385.10.peg.1142"/>
<dbReference type="GO" id="GO:0005576">
    <property type="term" value="C:extracellular region"/>
    <property type="evidence" value="ECO:0007669"/>
    <property type="project" value="UniProtKB-SubCell"/>
</dbReference>
<dbReference type="GO" id="GO:0005096">
    <property type="term" value="F:GTPase activator activity"/>
    <property type="evidence" value="ECO:0007669"/>
    <property type="project" value="UniProtKB-KW"/>
</dbReference>
<dbReference type="GO" id="GO:0005085">
    <property type="term" value="F:guanyl-nucleotide exchange factor activity"/>
    <property type="evidence" value="ECO:0007669"/>
    <property type="project" value="UniProtKB-KW"/>
</dbReference>
<dbReference type="GO" id="GO:0030036">
    <property type="term" value="P:actin cytoskeleton organization"/>
    <property type="evidence" value="ECO:0007669"/>
    <property type="project" value="InterPro"/>
</dbReference>
<dbReference type="Gene3D" id="1.10.4120.10">
    <property type="entry name" value="SopE-like, GEF domain"/>
    <property type="match status" value="1"/>
</dbReference>
<dbReference type="InterPro" id="IPR005414">
    <property type="entry name" value="SopE"/>
</dbReference>
<dbReference type="InterPro" id="IPR035949">
    <property type="entry name" value="SopE-like_GEF_dom_sf"/>
</dbReference>
<dbReference type="InterPro" id="IPR016019">
    <property type="entry name" value="SopE_GEF_dom"/>
</dbReference>
<dbReference type="InterPro" id="IPR016018">
    <property type="entry name" value="SopE_N_dom"/>
</dbReference>
<dbReference type="NCBIfam" id="NF011809">
    <property type="entry name" value="PRK15279.1"/>
    <property type="match status" value="1"/>
</dbReference>
<dbReference type="NCBIfam" id="NF011810">
    <property type="entry name" value="PRK15280.1"/>
    <property type="match status" value="1"/>
</dbReference>
<dbReference type="Pfam" id="PF05364">
    <property type="entry name" value="SecIII_SopE_N"/>
    <property type="match status" value="1"/>
</dbReference>
<dbReference type="Pfam" id="PF07487">
    <property type="entry name" value="SopE_GEF"/>
    <property type="match status" value="1"/>
</dbReference>
<dbReference type="PIRSF" id="PIRSF034781">
    <property type="entry name" value="SecIII_sopE"/>
    <property type="match status" value="1"/>
</dbReference>
<dbReference type="PRINTS" id="PR01593">
    <property type="entry name" value="SOPEPROTEIN"/>
</dbReference>
<dbReference type="SUPFAM" id="SSF81832">
    <property type="entry name" value="SopE-like GEF domain"/>
    <property type="match status" value="1"/>
</dbReference>
<proteinExistence type="inferred from homology"/>
<accession>Q8VPM1</accession>
<protein>
    <recommendedName>
        <fullName>Guanine nucleotide exchange factor SopE</fullName>
    </recommendedName>
    <alternativeName>
        <fullName>Effector protein SopE</fullName>
    </alternativeName>
    <alternativeName>
        <fullName>Toxin SopE</fullName>
    </alternativeName>
</protein>
<keyword id="KW-0343">GTPase activation</keyword>
<keyword id="KW-0344">Guanine-nucleotide releasing factor</keyword>
<keyword id="KW-0964">Secreted</keyword>
<keyword id="KW-0843">Virulence</keyword>
<organism>
    <name type="scientific">Salmonella hadar</name>
    <dbReference type="NCBI Taxonomy" id="149385"/>
    <lineage>
        <taxon>Bacteria</taxon>
        <taxon>Pseudomonadati</taxon>
        <taxon>Pseudomonadota</taxon>
        <taxon>Gammaproteobacteria</taxon>
        <taxon>Enterobacterales</taxon>
        <taxon>Enterobacteriaceae</taxon>
        <taxon>Salmonella</taxon>
    </lineage>
</organism>
<comment type="function">
    <text evidence="1">Activator for both CDC42 and RAC1 by directly engaging these Rho GTPases and acting as potent guanine nucleotide exchange factor (GEF). This activation results in actin cytoskeleton rearrangements and stimulates membrane ruffling, promoting bacterial entry into non-phagocytic cells (By similarity).</text>
</comment>
<comment type="subcellular location">
    <subcellularLocation>
        <location evidence="1">Secreted</location>
    </subcellularLocation>
    <text evidence="1">Secreted via the type III secretion system 1 (SPI-1 T3SS).</text>
</comment>
<comment type="miscellaneous">
    <text>Encoded within a lambda-like prophage region with similarity to GIFSY phages.</text>
</comment>
<comment type="similarity">
    <text evidence="2">Belongs to the GEF (guanine exchange factor) SopE family.</text>
</comment>
<gene>
    <name type="primary">sopE</name>
</gene>